<keyword id="KW-1185">Reference proteome</keyword>
<keyword id="KW-0687">Ribonucleoprotein</keyword>
<keyword id="KW-0689">Ribosomal protein</keyword>
<gene>
    <name evidence="1" type="primary">rpsJ</name>
    <name type="ordered locus">MYPU_5900</name>
</gene>
<proteinExistence type="inferred from homology"/>
<comment type="function">
    <text evidence="1">Involved in the binding of tRNA to the ribosomes.</text>
</comment>
<comment type="subunit">
    <text evidence="1">Part of the 30S ribosomal subunit.</text>
</comment>
<comment type="similarity">
    <text evidence="1">Belongs to the universal ribosomal protein uS10 family.</text>
</comment>
<reference key="1">
    <citation type="journal article" date="2001" name="Nucleic Acids Res.">
        <title>The complete genome sequence of the murine respiratory pathogen Mycoplasma pulmonis.</title>
        <authorList>
            <person name="Chambaud I."/>
            <person name="Heilig R."/>
            <person name="Ferris S."/>
            <person name="Barbe V."/>
            <person name="Samson D."/>
            <person name="Galisson F."/>
            <person name="Moszer I."/>
            <person name="Dybvig K."/>
            <person name="Wroblewski H."/>
            <person name="Viari A."/>
            <person name="Rocha E.P.C."/>
            <person name="Blanchard A."/>
        </authorList>
    </citation>
    <scope>NUCLEOTIDE SEQUENCE [LARGE SCALE GENOMIC DNA]</scope>
    <source>
        <strain>UAB CTIP</strain>
    </source>
</reference>
<name>RS10_MYCPU</name>
<sequence length="103" mass="12136">MKKEKLAMKFKSFDHKLVDDAVKKVLILASKEKIDYSGPIPLPTKREIFTILRSVHVNKKSREQFERRTYKRFIVFNNPGPKFVEILKRTEMPAGVEVEFKVK</sequence>
<accession>Q98PX9</accession>
<protein>
    <recommendedName>
        <fullName evidence="1">Small ribosomal subunit protein uS10</fullName>
    </recommendedName>
    <alternativeName>
        <fullName evidence="2">30S ribosomal protein S10</fullName>
    </alternativeName>
</protein>
<feature type="chain" id="PRO_0000146559" description="Small ribosomal subunit protein uS10">
    <location>
        <begin position="1"/>
        <end position="103"/>
    </location>
</feature>
<dbReference type="EMBL" id="AL445565">
    <property type="protein sequence ID" value="CAC13763.1"/>
    <property type="molecule type" value="Genomic_DNA"/>
</dbReference>
<dbReference type="PIR" id="F90585">
    <property type="entry name" value="F90585"/>
</dbReference>
<dbReference type="RefSeq" id="WP_010925391.1">
    <property type="nucleotide sequence ID" value="NC_002771.1"/>
</dbReference>
<dbReference type="SMR" id="Q98PX9"/>
<dbReference type="STRING" id="272635.gene:17577197"/>
<dbReference type="KEGG" id="mpu:MYPU_5900"/>
<dbReference type="eggNOG" id="COG0051">
    <property type="taxonomic scope" value="Bacteria"/>
</dbReference>
<dbReference type="HOGENOM" id="CLU_122625_1_3_14"/>
<dbReference type="BioCyc" id="MPUL272635:G1GT6-601-MONOMER"/>
<dbReference type="Proteomes" id="UP000000528">
    <property type="component" value="Chromosome"/>
</dbReference>
<dbReference type="GO" id="GO:1990904">
    <property type="term" value="C:ribonucleoprotein complex"/>
    <property type="evidence" value="ECO:0007669"/>
    <property type="project" value="UniProtKB-KW"/>
</dbReference>
<dbReference type="GO" id="GO:0005840">
    <property type="term" value="C:ribosome"/>
    <property type="evidence" value="ECO:0007669"/>
    <property type="project" value="UniProtKB-KW"/>
</dbReference>
<dbReference type="GO" id="GO:0003735">
    <property type="term" value="F:structural constituent of ribosome"/>
    <property type="evidence" value="ECO:0007669"/>
    <property type="project" value="InterPro"/>
</dbReference>
<dbReference type="GO" id="GO:0000049">
    <property type="term" value="F:tRNA binding"/>
    <property type="evidence" value="ECO:0007669"/>
    <property type="project" value="UniProtKB-UniRule"/>
</dbReference>
<dbReference type="GO" id="GO:0006412">
    <property type="term" value="P:translation"/>
    <property type="evidence" value="ECO:0007669"/>
    <property type="project" value="UniProtKB-UniRule"/>
</dbReference>
<dbReference type="FunFam" id="3.30.70.600:FF:000003">
    <property type="entry name" value="30S ribosomal protein S10"/>
    <property type="match status" value="1"/>
</dbReference>
<dbReference type="Gene3D" id="3.30.70.600">
    <property type="entry name" value="Ribosomal protein S10 domain"/>
    <property type="match status" value="1"/>
</dbReference>
<dbReference type="HAMAP" id="MF_00508">
    <property type="entry name" value="Ribosomal_uS10"/>
    <property type="match status" value="1"/>
</dbReference>
<dbReference type="InterPro" id="IPR001848">
    <property type="entry name" value="Ribosomal_uS10"/>
</dbReference>
<dbReference type="InterPro" id="IPR027486">
    <property type="entry name" value="Ribosomal_uS10_dom"/>
</dbReference>
<dbReference type="InterPro" id="IPR036838">
    <property type="entry name" value="Ribosomal_uS10_dom_sf"/>
</dbReference>
<dbReference type="NCBIfam" id="NF001861">
    <property type="entry name" value="PRK00596.1"/>
    <property type="match status" value="1"/>
</dbReference>
<dbReference type="NCBIfam" id="TIGR01049">
    <property type="entry name" value="rpsJ_bact"/>
    <property type="match status" value="1"/>
</dbReference>
<dbReference type="PANTHER" id="PTHR11700">
    <property type="entry name" value="30S RIBOSOMAL PROTEIN S10 FAMILY MEMBER"/>
    <property type="match status" value="1"/>
</dbReference>
<dbReference type="Pfam" id="PF00338">
    <property type="entry name" value="Ribosomal_S10"/>
    <property type="match status" value="1"/>
</dbReference>
<dbReference type="PRINTS" id="PR00971">
    <property type="entry name" value="RIBOSOMALS10"/>
</dbReference>
<dbReference type="SMART" id="SM01403">
    <property type="entry name" value="Ribosomal_S10"/>
    <property type="match status" value="1"/>
</dbReference>
<dbReference type="SUPFAM" id="SSF54999">
    <property type="entry name" value="Ribosomal protein S10"/>
    <property type="match status" value="1"/>
</dbReference>
<organism>
    <name type="scientific">Mycoplasmopsis pulmonis (strain UAB CTIP)</name>
    <name type="common">Mycoplasma pulmonis</name>
    <dbReference type="NCBI Taxonomy" id="272635"/>
    <lineage>
        <taxon>Bacteria</taxon>
        <taxon>Bacillati</taxon>
        <taxon>Mycoplasmatota</taxon>
        <taxon>Mycoplasmoidales</taxon>
        <taxon>Metamycoplasmataceae</taxon>
        <taxon>Mycoplasmopsis</taxon>
    </lineage>
</organism>
<evidence type="ECO:0000255" key="1">
    <source>
        <dbReference type="HAMAP-Rule" id="MF_00508"/>
    </source>
</evidence>
<evidence type="ECO:0000305" key="2"/>